<gene>
    <name type="primary">AIM36</name>
    <name type="synonym">FMP39</name>
    <name type="ORF">SCRG_02047</name>
</gene>
<comment type="subcellular location">
    <subcellularLocation>
        <location evidence="1">Mitochondrion membrane</location>
        <topology evidence="1">Single-pass membrane protein</topology>
    </subcellularLocation>
</comment>
<comment type="similarity">
    <text evidence="3">Belongs to the AIM36 family.</text>
</comment>
<keyword id="KW-0472">Membrane</keyword>
<keyword id="KW-0496">Mitochondrion</keyword>
<keyword id="KW-0809">Transit peptide</keyword>
<keyword id="KW-0812">Transmembrane</keyword>
<keyword id="KW-1133">Transmembrane helix</keyword>
<evidence type="ECO:0000250" key="1"/>
<evidence type="ECO:0000255" key="2"/>
<evidence type="ECO:0000305" key="3"/>
<feature type="transit peptide" description="Mitochondrion" evidence="2">
    <location>
        <begin position="1"/>
        <end position="40"/>
    </location>
</feature>
<feature type="chain" id="PRO_0000399731" description="Altered inheritance of mitochondria protein 36, mitochondrial">
    <location>
        <begin position="41"/>
        <end position="255"/>
    </location>
</feature>
<feature type="transmembrane region" description="Helical" evidence="2">
    <location>
        <begin position="64"/>
        <end position="82"/>
    </location>
</feature>
<organism>
    <name type="scientific">Saccharomyces cerevisiae (strain RM11-1a)</name>
    <name type="common">Baker's yeast</name>
    <dbReference type="NCBI Taxonomy" id="285006"/>
    <lineage>
        <taxon>Eukaryota</taxon>
        <taxon>Fungi</taxon>
        <taxon>Dikarya</taxon>
        <taxon>Ascomycota</taxon>
        <taxon>Saccharomycotina</taxon>
        <taxon>Saccharomycetes</taxon>
        <taxon>Saccharomycetales</taxon>
        <taxon>Saccharomycetaceae</taxon>
        <taxon>Saccharomyces</taxon>
    </lineage>
</organism>
<dbReference type="EMBL" id="CH408047">
    <property type="protein sequence ID" value="EDV11647.1"/>
    <property type="molecule type" value="Genomic_DNA"/>
</dbReference>
<dbReference type="SMR" id="B3LM44"/>
<dbReference type="HOGENOM" id="CLU_090420_0_0_1"/>
<dbReference type="OrthoDB" id="41158at4893"/>
<dbReference type="Proteomes" id="UP000008335">
    <property type="component" value="Unassembled WGS sequence"/>
</dbReference>
<dbReference type="GO" id="GO:0031966">
    <property type="term" value="C:mitochondrial membrane"/>
    <property type="evidence" value="ECO:0007669"/>
    <property type="project" value="UniProtKB-SubCell"/>
</dbReference>
<reference key="1">
    <citation type="submission" date="2005-03" db="EMBL/GenBank/DDBJ databases">
        <title>Annotation of the Saccharomyces cerevisiae RM11-1a genome.</title>
        <authorList>
            <consortium name="The Broad Institute Genome Sequencing Platform"/>
            <person name="Birren B.W."/>
            <person name="Lander E.S."/>
            <person name="Galagan J.E."/>
            <person name="Nusbaum C."/>
            <person name="Devon K."/>
            <person name="Cuomo C."/>
            <person name="Jaffe D.B."/>
            <person name="Butler J."/>
            <person name="Alvarez P."/>
            <person name="Gnerre S."/>
            <person name="Grabherr M."/>
            <person name="Kleber M."/>
            <person name="Mauceli E.W."/>
            <person name="Brockman W."/>
            <person name="MacCallum I.A."/>
            <person name="Rounsley S."/>
            <person name="Young S.K."/>
            <person name="LaButti K."/>
            <person name="Pushparaj V."/>
            <person name="DeCaprio D."/>
            <person name="Crawford M."/>
            <person name="Koehrsen M."/>
            <person name="Engels R."/>
            <person name="Montgomery P."/>
            <person name="Pearson M."/>
            <person name="Howarth C."/>
            <person name="Larson L."/>
            <person name="Luoma S."/>
            <person name="White J."/>
            <person name="O'Leary S."/>
            <person name="Kodira C.D."/>
            <person name="Zeng Q."/>
            <person name="Yandava C."/>
            <person name="Alvarado L."/>
            <person name="Pratt S."/>
            <person name="Kruglyak L."/>
        </authorList>
    </citation>
    <scope>NUCLEOTIDE SEQUENCE [LARGE SCALE GENOMIC DNA]</scope>
    <source>
        <strain>RM11-1a</strain>
    </source>
</reference>
<sequence>MLRPLRKSVLASCRHCFKVCGGLPQKQLPLFSPLLLRARYSSTDSSTKRSNKSDKIDAPGFKKIFLVAIIGTVIFVKTVQSLDKNKPKTTLSEEEFENVVKGLKRRVAIFPQGEVDIKFSLSPSIEETRKVLQKSQGDDINELQFVDPVKVIDYYRTLRDDRYEALLNEYYKKYGCDTYAYNLPTGMLVMLLGRYFKENFKAGDKLVVVNFPHSIADATRFENEVSIVSKIFVPRKLSGSDVCKYYETVGKADII</sequence>
<proteinExistence type="inferred from homology"/>
<protein>
    <recommendedName>
        <fullName>Altered inheritance of mitochondria protein 36, mitochondrial</fullName>
    </recommendedName>
    <alternativeName>
        <fullName>Found in mitochondria protein 39</fullName>
    </alternativeName>
</protein>
<name>AIM36_YEAS1</name>
<accession>B3LM44</accession>